<accession>P0DJ64</accession>
<organism>
    <name type="scientific">Cyriopagopus hainanus</name>
    <name type="common">Chinese bird spider</name>
    <name type="synonym">Haplopelma hainanum</name>
    <dbReference type="NCBI Taxonomy" id="209901"/>
    <lineage>
        <taxon>Eukaryota</taxon>
        <taxon>Metazoa</taxon>
        <taxon>Ecdysozoa</taxon>
        <taxon>Arthropoda</taxon>
        <taxon>Chelicerata</taxon>
        <taxon>Arachnida</taxon>
        <taxon>Araneae</taxon>
        <taxon>Mygalomorphae</taxon>
        <taxon>Theraphosidae</taxon>
        <taxon>Haplopelma</taxon>
    </lineage>
</organism>
<sequence length="88" mass="9859">MGTARFLRAVLLLSVLLMVTFPALLSAEHHDGRVDICRLPSDSGDCLRFFEMWYFDGTTCTKFVYGGYGGNDNRFPTEKACVKRCAKA</sequence>
<keyword id="KW-1015">Disulfide bond</keyword>
<keyword id="KW-0646">Protease inhibitor</keyword>
<keyword id="KW-0964">Secreted</keyword>
<keyword id="KW-0722">Serine protease inhibitor</keyword>
<keyword id="KW-0732">Signal</keyword>
<name>VKT31_CYRHA</name>
<protein>
    <recommendedName>
        <fullName>U15-Kunitz-type theraphotoxin-Hhn1b</fullName>
        <shortName>U15-TRTX-Hhn1b</shortName>
    </recommendedName>
    <alternativeName>
        <fullName evidence="5">Kunitz-type serine protease inhibitor HNTX-0314931</fullName>
    </alternativeName>
</protein>
<dbReference type="SMR" id="P0DJ64"/>
<dbReference type="ArachnoServer" id="AS001598">
    <property type="toxin name" value="U15-theraphotoxin-Hhn1b"/>
</dbReference>
<dbReference type="GO" id="GO:0005576">
    <property type="term" value="C:extracellular region"/>
    <property type="evidence" value="ECO:0007669"/>
    <property type="project" value="UniProtKB-SubCell"/>
</dbReference>
<dbReference type="GO" id="GO:0015459">
    <property type="term" value="F:potassium channel regulator activity"/>
    <property type="evidence" value="ECO:0007669"/>
    <property type="project" value="UniProtKB-KW"/>
</dbReference>
<dbReference type="GO" id="GO:0004867">
    <property type="term" value="F:serine-type endopeptidase inhibitor activity"/>
    <property type="evidence" value="ECO:0007669"/>
    <property type="project" value="UniProtKB-KW"/>
</dbReference>
<dbReference type="GO" id="GO:0090729">
    <property type="term" value="F:toxin activity"/>
    <property type="evidence" value="ECO:0007669"/>
    <property type="project" value="UniProtKB-KW"/>
</dbReference>
<dbReference type="GO" id="GO:0044562">
    <property type="term" value="P:envenomation resulting in negative regulation of voltage-gated potassium channel activity in another organism"/>
    <property type="evidence" value="ECO:0007669"/>
    <property type="project" value="UniProtKB-ARBA"/>
</dbReference>
<dbReference type="CDD" id="cd22598">
    <property type="entry name" value="Kunitz_huwentoxin"/>
    <property type="match status" value="1"/>
</dbReference>
<dbReference type="FunFam" id="4.10.410.10:FF:000020">
    <property type="entry name" value="Collagen, type VI, alpha 3"/>
    <property type="match status" value="1"/>
</dbReference>
<dbReference type="Gene3D" id="4.10.410.10">
    <property type="entry name" value="Pancreatic trypsin inhibitor Kunitz domain"/>
    <property type="match status" value="1"/>
</dbReference>
<dbReference type="InterPro" id="IPR002223">
    <property type="entry name" value="Kunitz_BPTI"/>
</dbReference>
<dbReference type="InterPro" id="IPR036880">
    <property type="entry name" value="Kunitz_BPTI_sf"/>
</dbReference>
<dbReference type="InterPro" id="IPR051388">
    <property type="entry name" value="Serpin_venom_toxin"/>
</dbReference>
<dbReference type="PANTHER" id="PTHR46751">
    <property type="entry name" value="EPPIN"/>
    <property type="match status" value="1"/>
</dbReference>
<dbReference type="PANTHER" id="PTHR46751:SF1">
    <property type="entry name" value="WAP FOUR-DISULFIDE CORE DOMAIN PROTEIN 6A"/>
    <property type="match status" value="1"/>
</dbReference>
<dbReference type="Pfam" id="PF00014">
    <property type="entry name" value="Kunitz_BPTI"/>
    <property type="match status" value="1"/>
</dbReference>
<dbReference type="PRINTS" id="PR00759">
    <property type="entry name" value="BASICPTASE"/>
</dbReference>
<dbReference type="SMART" id="SM00131">
    <property type="entry name" value="KU"/>
    <property type="match status" value="1"/>
</dbReference>
<dbReference type="SUPFAM" id="SSF57362">
    <property type="entry name" value="BPTI-like"/>
    <property type="match status" value="1"/>
</dbReference>
<dbReference type="PROSITE" id="PS50279">
    <property type="entry name" value="BPTI_KUNITZ_2"/>
    <property type="match status" value="1"/>
</dbReference>
<reference key="1">
    <citation type="journal article" date="2008" name="PLoS ONE">
        <title>Discovery of a distinct superfamily of Kunitz-type toxin (KTT) from tarantulas.</title>
        <authorList>
            <person name="Yuan C.-H."/>
            <person name="He Q.-Y."/>
            <person name="Peng K."/>
            <person name="Diao J.-B."/>
            <person name="Jiang L.-P."/>
            <person name="Tang X."/>
            <person name="Liang S.-P."/>
        </authorList>
    </citation>
    <scope>NUCLEOTIDE SEQUENCE [MRNA]</scope>
    <source>
        <tissue>Venom gland</tissue>
    </source>
</reference>
<evidence type="ECO:0000250" key="1"/>
<evidence type="ECO:0000250" key="2">
    <source>
        <dbReference type="UniProtKB" id="P68425"/>
    </source>
</evidence>
<evidence type="ECO:0000255" key="3"/>
<evidence type="ECO:0000255" key="4">
    <source>
        <dbReference type="PROSITE-ProRule" id="PRU00031"/>
    </source>
</evidence>
<evidence type="ECO:0000303" key="5">
    <source>
    </source>
</evidence>
<evidence type="ECO:0000305" key="6"/>
<evidence type="ECO:0000305" key="7">
    <source>
    </source>
</evidence>
<comment type="function">
    <text evidence="2">Serine protease inhibitor that inhibits trypsin at a molar ratio of 1:1.</text>
</comment>
<comment type="subcellular location">
    <subcellularLocation>
        <location evidence="7">Secreted</location>
    </subcellularLocation>
</comment>
<comment type="tissue specificity">
    <text evidence="7">Expressed by the venom gland.</text>
</comment>
<comment type="similarity">
    <text evidence="6">Belongs to the venom Kunitz-type family. 03 (sub-Kunitz) subfamily.</text>
</comment>
<feature type="signal peptide" evidence="3">
    <location>
        <begin position="1"/>
        <end position="27"/>
    </location>
</feature>
<feature type="propeptide" id="PRO_0000413805" evidence="1">
    <location>
        <begin position="28"/>
        <end position="33"/>
    </location>
</feature>
<feature type="chain" id="PRO_0000413806" description="U15-Kunitz-type theraphotoxin-Hhn1b">
    <location>
        <begin position="34"/>
        <end position="88"/>
    </location>
</feature>
<feature type="domain" description="BPTI/Kunitz inhibitor" evidence="4">
    <location>
        <begin position="37"/>
        <end position="85"/>
    </location>
</feature>
<feature type="site" description="May bind Kv1" evidence="1">
    <location>
        <position position="39"/>
    </location>
</feature>
<feature type="site" description="Reactive bond for chymotrypsin" evidence="1">
    <location>
        <begin position="47"/>
        <end position="48"/>
    </location>
</feature>
<feature type="disulfide bond" evidence="4">
    <location>
        <begin position="37"/>
        <end position="85"/>
    </location>
</feature>
<feature type="disulfide bond" evidence="4">
    <location>
        <begin position="60"/>
        <end position="81"/>
    </location>
</feature>
<proteinExistence type="inferred from homology"/>